<reference key="1">
    <citation type="journal article" date="2004" name="Mol. Plant Microbe Interact.">
        <title>The genome sequence of the Gram-positive sugarcane pathogen Leifsonia xyli subsp. xyli.</title>
        <authorList>
            <person name="Monteiro-Vitorello C.B."/>
            <person name="Camargo L.E.A."/>
            <person name="Van Sluys M.A."/>
            <person name="Kitajima J.P."/>
            <person name="Truffi D."/>
            <person name="do Amaral A.M."/>
            <person name="Harakava R."/>
            <person name="de Oliveira J.C.F."/>
            <person name="Wood D."/>
            <person name="de Oliveira M.C."/>
            <person name="Miyaki C.Y."/>
            <person name="Takita M.A."/>
            <person name="da Silva A.C.R."/>
            <person name="Furlan L.R."/>
            <person name="Carraro D.M."/>
            <person name="Camarotte G."/>
            <person name="Almeida N.F. Jr."/>
            <person name="Carrer H."/>
            <person name="Coutinho L.L."/>
            <person name="El-Dorry H.A."/>
            <person name="Ferro M.I.T."/>
            <person name="Gagliardi P.R."/>
            <person name="Giglioti E."/>
            <person name="Goldman M.H.S."/>
            <person name="Goldman G.H."/>
            <person name="Kimura E.T."/>
            <person name="Ferro E.S."/>
            <person name="Kuramae E.E."/>
            <person name="Lemos E.G.M."/>
            <person name="Lemos M.V.F."/>
            <person name="Mauro S.M.Z."/>
            <person name="Machado M.A."/>
            <person name="Marino C.L."/>
            <person name="Menck C.F."/>
            <person name="Nunes L.R."/>
            <person name="Oliveira R.C."/>
            <person name="Pereira G.G."/>
            <person name="Siqueira W."/>
            <person name="de Souza A.A."/>
            <person name="Tsai S.M."/>
            <person name="Zanca A.S."/>
            <person name="Simpson A.J.G."/>
            <person name="Brumbley S.M."/>
            <person name="Setubal J.C."/>
        </authorList>
    </citation>
    <scope>NUCLEOTIDE SEQUENCE [LARGE SCALE GENOMIC DNA]</scope>
    <source>
        <strain>CTCB07</strain>
    </source>
</reference>
<dbReference type="EC" id="4.2.1.33" evidence="1"/>
<dbReference type="EMBL" id="AE016822">
    <property type="protein sequence ID" value="AAT88839.1"/>
    <property type="molecule type" value="Genomic_DNA"/>
</dbReference>
<dbReference type="RefSeq" id="WP_011185836.1">
    <property type="nucleotide sequence ID" value="NC_006087.1"/>
</dbReference>
<dbReference type="SMR" id="Q6AFK6"/>
<dbReference type="STRING" id="281090.Lxx09680"/>
<dbReference type="KEGG" id="lxx:Lxx09680"/>
<dbReference type="eggNOG" id="COG0066">
    <property type="taxonomic scope" value="Bacteria"/>
</dbReference>
<dbReference type="HOGENOM" id="CLU_081378_0_1_11"/>
<dbReference type="UniPathway" id="UPA00048">
    <property type="reaction ID" value="UER00071"/>
</dbReference>
<dbReference type="Proteomes" id="UP000001306">
    <property type="component" value="Chromosome"/>
</dbReference>
<dbReference type="GO" id="GO:0009316">
    <property type="term" value="C:3-isopropylmalate dehydratase complex"/>
    <property type="evidence" value="ECO:0007669"/>
    <property type="project" value="InterPro"/>
</dbReference>
<dbReference type="GO" id="GO:0003861">
    <property type="term" value="F:3-isopropylmalate dehydratase activity"/>
    <property type="evidence" value="ECO:0007669"/>
    <property type="project" value="UniProtKB-UniRule"/>
</dbReference>
<dbReference type="GO" id="GO:0009098">
    <property type="term" value="P:L-leucine biosynthetic process"/>
    <property type="evidence" value="ECO:0007669"/>
    <property type="project" value="UniProtKB-UniRule"/>
</dbReference>
<dbReference type="CDD" id="cd01577">
    <property type="entry name" value="IPMI_Swivel"/>
    <property type="match status" value="1"/>
</dbReference>
<dbReference type="FunFam" id="3.20.19.10:FF:000003">
    <property type="entry name" value="3-isopropylmalate dehydratase small subunit"/>
    <property type="match status" value="1"/>
</dbReference>
<dbReference type="Gene3D" id="3.20.19.10">
    <property type="entry name" value="Aconitase, domain 4"/>
    <property type="match status" value="1"/>
</dbReference>
<dbReference type="HAMAP" id="MF_01031">
    <property type="entry name" value="LeuD_type1"/>
    <property type="match status" value="1"/>
</dbReference>
<dbReference type="InterPro" id="IPR004431">
    <property type="entry name" value="3-IsopropMal_deHydase_ssu"/>
</dbReference>
<dbReference type="InterPro" id="IPR015928">
    <property type="entry name" value="Aconitase/3IPM_dehydase_swvl"/>
</dbReference>
<dbReference type="InterPro" id="IPR000573">
    <property type="entry name" value="AconitaseA/IPMdHydase_ssu_swvl"/>
</dbReference>
<dbReference type="InterPro" id="IPR033940">
    <property type="entry name" value="IPMI_Swivel"/>
</dbReference>
<dbReference type="InterPro" id="IPR050075">
    <property type="entry name" value="LeuD"/>
</dbReference>
<dbReference type="NCBIfam" id="TIGR00171">
    <property type="entry name" value="leuD"/>
    <property type="match status" value="1"/>
</dbReference>
<dbReference type="NCBIfam" id="NF002458">
    <property type="entry name" value="PRK01641.1"/>
    <property type="match status" value="1"/>
</dbReference>
<dbReference type="PANTHER" id="PTHR43345:SF5">
    <property type="entry name" value="3-ISOPROPYLMALATE DEHYDRATASE SMALL SUBUNIT"/>
    <property type="match status" value="1"/>
</dbReference>
<dbReference type="PANTHER" id="PTHR43345">
    <property type="entry name" value="3-ISOPROPYLMALATE DEHYDRATASE SMALL SUBUNIT 2-RELATED-RELATED"/>
    <property type="match status" value="1"/>
</dbReference>
<dbReference type="Pfam" id="PF00694">
    <property type="entry name" value="Aconitase_C"/>
    <property type="match status" value="1"/>
</dbReference>
<dbReference type="SUPFAM" id="SSF52016">
    <property type="entry name" value="LeuD/IlvD-like"/>
    <property type="match status" value="1"/>
</dbReference>
<accession>Q6AFK6</accession>
<keyword id="KW-0028">Amino-acid biosynthesis</keyword>
<keyword id="KW-0100">Branched-chain amino acid biosynthesis</keyword>
<keyword id="KW-0432">Leucine biosynthesis</keyword>
<keyword id="KW-0456">Lyase</keyword>
<keyword id="KW-1185">Reference proteome</keyword>
<feature type="chain" id="PRO_0000141827" description="3-isopropylmalate dehydratase small subunit">
    <location>
        <begin position="1"/>
        <end position="199"/>
    </location>
</feature>
<protein>
    <recommendedName>
        <fullName evidence="1">3-isopropylmalate dehydratase small subunit</fullName>
        <ecNumber evidence="1">4.2.1.33</ecNumber>
    </recommendedName>
    <alternativeName>
        <fullName evidence="1">Alpha-IPM isomerase</fullName>
        <shortName evidence="1">IPMI</shortName>
    </alternativeName>
    <alternativeName>
        <fullName evidence="1">Isopropylmalate isomerase</fullName>
    </alternativeName>
</protein>
<organism>
    <name type="scientific">Leifsonia xyli subsp. xyli (strain CTCB07)</name>
    <dbReference type="NCBI Taxonomy" id="281090"/>
    <lineage>
        <taxon>Bacteria</taxon>
        <taxon>Bacillati</taxon>
        <taxon>Actinomycetota</taxon>
        <taxon>Actinomycetes</taxon>
        <taxon>Micrococcales</taxon>
        <taxon>Microbacteriaceae</taxon>
        <taxon>Leifsonia</taxon>
    </lineage>
</organism>
<gene>
    <name evidence="1" type="primary">leuD</name>
    <name type="ordered locus">Lxx09680</name>
</gene>
<evidence type="ECO:0000255" key="1">
    <source>
        <dbReference type="HAMAP-Rule" id="MF_01031"/>
    </source>
</evidence>
<name>LEUD_LEIXX</name>
<proteinExistence type="inferred from homology"/>
<comment type="function">
    <text evidence="1">Catalyzes the isomerization between 2-isopropylmalate and 3-isopropylmalate, via the formation of 2-isopropylmaleate.</text>
</comment>
<comment type="catalytic activity">
    <reaction evidence="1">
        <text>(2R,3S)-3-isopropylmalate = (2S)-2-isopropylmalate</text>
        <dbReference type="Rhea" id="RHEA:32287"/>
        <dbReference type="ChEBI" id="CHEBI:1178"/>
        <dbReference type="ChEBI" id="CHEBI:35121"/>
        <dbReference type="EC" id="4.2.1.33"/>
    </reaction>
</comment>
<comment type="pathway">
    <text evidence="1">Amino-acid biosynthesis; L-leucine biosynthesis; L-leucine from 3-methyl-2-oxobutanoate: step 2/4.</text>
</comment>
<comment type="subunit">
    <text evidence="1">Heterodimer of LeuC and LeuD.</text>
</comment>
<comment type="similarity">
    <text evidence="1">Belongs to the LeuD family. LeuD type 1 subfamily.</text>
</comment>
<sequence length="199" mass="22250">MEKFETVNGVAVPFRRSNVDTDQIIPAVFLKRVTKTGFDDALFHAWRQDPGFILNQEAYQGATVLIAGPDFGTGSSREHAVWALRDYGFRVVLSPRFADIFRGNSGKQGLLTGVISEEDAERLWGAIEAQPGITATVDLVAKTATVGEVQVSFDIDHYTRWRLLEGLDDIALTLRDEVRISEYEAARARWRPKTLPVKL</sequence>